<evidence type="ECO:0000255" key="1">
    <source>
        <dbReference type="HAMAP-Rule" id="MF_00378"/>
    </source>
</evidence>
<dbReference type="EC" id="3.1.11.6" evidence="1"/>
<dbReference type="EMBL" id="AM039952">
    <property type="protein sequence ID" value="CAJ24284.1"/>
    <property type="molecule type" value="Genomic_DNA"/>
</dbReference>
<dbReference type="RefSeq" id="WP_011347754.1">
    <property type="nucleotide sequence ID" value="NZ_CP017190.1"/>
</dbReference>
<dbReference type="SMR" id="Q3BSC5"/>
<dbReference type="STRING" id="456327.BJD11_09855"/>
<dbReference type="KEGG" id="xcv:XCV2607"/>
<dbReference type="eggNOG" id="COG1570">
    <property type="taxonomic scope" value="Bacteria"/>
</dbReference>
<dbReference type="HOGENOM" id="CLU_023625_3_1_6"/>
<dbReference type="Proteomes" id="UP000007069">
    <property type="component" value="Chromosome"/>
</dbReference>
<dbReference type="GO" id="GO:0005737">
    <property type="term" value="C:cytoplasm"/>
    <property type="evidence" value="ECO:0007669"/>
    <property type="project" value="UniProtKB-SubCell"/>
</dbReference>
<dbReference type="GO" id="GO:0009318">
    <property type="term" value="C:exodeoxyribonuclease VII complex"/>
    <property type="evidence" value="ECO:0007669"/>
    <property type="project" value="InterPro"/>
</dbReference>
<dbReference type="GO" id="GO:0008855">
    <property type="term" value="F:exodeoxyribonuclease VII activity"/>
    <property type="evidence" value="ECO:0007669"/>
    <property type="project" value="UniProtKB-UniRule"/>
</dbReference>
<dbReference type="GO" id="GO:0003676">
    <property type="term" value="F:nucleic acid binding"/>
    <property type="evidence" value="ECO:0007669"/>
    <property type="project" value="InterPro"/>
</dbReference>
<dbReference type="GO" id="GO:0006308">
    <property type="term" value="P:DNA catabolic process"/>
    <property type="evidence" value="ECO:0007669"/>
    <property type="project" value="UniProtKB-UniRule"/>
</dbReference>
<dbReference type="CDD" id="cd04489">
    <property type="entry name" value="ExoVII_LU_OBF"/>
    <property type="match status" value="1"/>
</dbReference>
<dbReference type="HAMAP" id="MF_00378">
    <property type="entry name" value="Exonuc_7_L"/>
    <property type="match status" value="1"/>
</dbReference>
<dbReference type="InterPro" id="IPR003753">
    <property type="entry name" value="Exonuc_VII_L"/>
</dbReference>
<dbReference type="InterPro" id="IPR020579">
    <property type="entry name" value="Exonuc_VII_lsu_C"/>
</dbReference>
<dbReference type="InterPro" id="IPR025824">
    <property type="entry name" value="OB-fold_nuc-bd_dom"/>
</dbReference>
<dbReference type="NCBIfam" id="TIGR00237">
    <property type="entry name" value="xseA"/>
    <property type="match status" value="1"/>
</dbReference>
<dbReference type="PANTHER" id="PTHR30008">
    <property type="entry name" value="EXODEOXYRIBONUCLEASE 7 LARGE SUBUNIT"/>
    <property type="match status" value="1"/>
</dbReference>
<dbReference type="PANTHER" id="PTHR30008:SF0">
    <property type="entry name" value="EXODEOXYRIBONUCLEASE 7 LARGE SUBUNIT"/>
    <property type="match status" value="1"/>
</dbReference>
<dbReference type="Pfam" id="PF02601">
    <property type="entry name" value="Exonuc_VII_L"/>
    <property type="match status" value="1"/>
</dbReference>
<dbReference type="Pfam" id="PF13742">
    <property type="entry name" value="tRNA_anti_2"/>
    <property type="match status" value="1"/>
</dbReference>
<gene>
    <name evidence="1" type="primary">xseA</name>
    <name type="ordered locus">XCV2607</name>
</gene>
<proteinExistence type="inferred from homology"/>
<comment type="function">
    <text evidence="1">Bidirectionally degrades single-stranded DNA into large acid-insoluble oligonucleotides, which are then degraded further into small acid-soluble oligonucleotides.</text>
</comment>
<comment type="catalytic activity">
    <reaction evidence="1">
        <text>Exonucleolytic cleavage in either 5'- to 3'- or 3'- to 5'-direction to yield nucleoside 5'-phosphates.</text>
        <dbReference type="EC" id="3.1.11.6"/>
    </reaction>
</comment>
<comment type="subunit">
    <text evidence="1">Heterooligomer composed of large and small subunits.</text>
</comment>
<comment type="subcellular location">
    <subcellularLocation>
        <location evidence="1">Cytoplasm</location>
    </subcellularLocation>
</comment>
<comment type="similarity">
    <text evidence="1">Belongs to the XseA family.</text>
</comment>
<name>EX7L_XANE5</name>
<accession>Q3BSC5</accession>
<protein>
    <recommendedName>
        <fullName evidence="1">Exodeoxyribonuclease 7 large subunit</fullName>
        <ecNumber evidence="1">3.1.11.6</ecNumber>
    </recommendedName>
    <alternativeName>
        <fullName evidence="1">Exodeoxyribonuclease VII large subunit</fullName>
        <shortName evidence="1">Exonuclease VII large subunit</shortName>
    </alternativeName>
</protein>
<sequence length="445" mass="49220">MADRNDQILTPSQLNSLARDLLEGSFPLVWVEAELSSVTRPASGHLYFTLKDARAQIRCAMFKPKSTWLKFQPREGLRVLARGRLTLYEARGDYQLVLDHMEEAGEGALRRAFDELRARLAAEGLFDAERKQALPAHVQRLAVITSPSGAAVRDVLSVLARRFPLLEVDLLPSLVQGDSAAAQITSLLQRADASGRYDVILITRGGGSLEDLWAFNDERLARAIAAAQTPVVSAVGHETDFSLSDFVADVRAPTPSVAAELLVPDQRELVARVRRAQARMTQLQQHALGNAMQRADRLALRLRAQSPQARLQLLHRRQQDAGRQLRARMMQVLERLQARVQQGQAQLQAHNPQRQLAGLQQRLRALHPQAAMQRRLQHDQLQLRSIARSLEAVSPLATVARGYAIVTRPADGSVVRSAAEVVTGERLRAQLADGSIQVRVESGES</sequence>
<organism>
    <name type="scientific">Xanthomonas euvesicatoria pv. vesicatoria (strain 85-10)</name>
    <name type="common">Xanthomonas campestris pv. vesicatoria</name>
    <dbReference type="NCBI Taxonomy" id="316273"/>
    <lineage>
        <taxon>Bacteria</taxon>
        <taxon>Pseudomonadati</taxon>
        <taxon>Pseudomonadota</taxon>
        <taxon>Gammaproteobacteria</taxon>
        <taxon>Lysobacterales</taxon>
        <taxon>Lysobacteraceae</taxon>
        <taxon>Xanthomonas</taxon>
    </lineage>
</organism>
<feature type="chain" id="PRO_0000273702" description="Exodeoxyribonuclease 7 large subunit">
    <location>
        <begin position="1"/>
        <end position="445"/>
    </location>
</feature>
<reference key="1">
    <citation type="journal article" date="2005" name="J. Bacteriol.">
        <title>Insights into genome plasticity and pathogenicity of the plant pathogenic Bacterium Xanthomonas campestris pv. vesicatoria revealed by the complete genome sequence.</title>
        <authorList>
            <person name="Thieme F."/>
            <person name="Koebnik R."/>
            <person name="Bekel T."/>
            <person name="Berger C."/>
            <person name="Boch J."/>
            <person name="Buettner D."/>
            <person name="Caldana C."/>
            <person name="Gaigalat L."/>
            <person name="Goesmann A."/>
            <person name="Kay S."/>
            <person name="Kirchner O."/>
            <person name="Lanz C."/>
            <person name="Linke B."/>
            <person name="McHardy A.C."/>
            <person name="Meyer F."/>
            <person name="Mittenhuber G."/>
            <person name="Nies D.H."/>
            <person name="Niesbach-Kloesgen U."/>
            <person name="Patschkowski T."/>
            <person name="Rueckert C."/>
            <person name="Rupp O."/>
            <person name="Schneiker S."/>
            <person name="Schuster S.C."/>
            <person name="Vorhoelter F.J."/>
            <person name="Weber E."/>
            <person name="Puehler A."/>
            <person name="Bonas U."/>
            <person name="Bartels D."/>
            <person name="Kaiser O."/>
        </authorList>
    </citation>
    <scope>NUCLEOTIDE SEQUENCE [LARGE SCALE GENOMIC DNA]</scope>
    <source>
        <strain>85-10</strain>
    </source>
</reference>
<keyword id="KW-0963">Cytoplasm</keyword>
<keyword id="KW-0269">Exonuclease</keyword>
<keyword id="KW-0378">Hydrolase</keyword>
<keyword id="KW-0540">Nuclease</keyword>